<sequence>MKNFKNQNFQKENLNLSFSQKRKKFSGKIGICFFEYNFFQKNFHVQNFPIKKCRLLAQVSEQTPQISSFRQTSNFTPNLIKKKLLNGYSKIHELKLVTIELASPEKIKAWAEKELPNGKIFGEVTNANTFHYRTFKPSKGGLFCEHIFGPLKDFECACGKRQRPSALESRKILEHQKTSRYFCPNCDVEYTWSIIRRYQLGYIKLNAPVTHLWYFKTNPSYLSILFDMKRRHLESIIYCTETITIENTWKYSQQTSILNRSPKDLYLTWQKFFTLEEQLQQYNRIYQNKHQHQKQRKLEFRNLSILQNKISPQINWKNFDQQIVEKNQNNSVFAKNFQTFENIETFGLKRKHSIFENISMQKQKKFGTYFFEEIWKIILQKSYKNSFLFLNSQECFSEHFFQNIYRISNIFLFSSKKIQKFLKFHEIFIFGNTESLNKTILELKNKKRTVNFFSKDFTPFFIDQNVFESHNSLKIKKQYWKSFFFLFEFTRFFLSKKNTKIQNLNVLSKKDFLFLVNLIPFLKKLALFQNLQVFKKNTKKSHAFYIQNLSKKNKSLKKKIFLKKNLFTEQNLISFQNQVQKNKIFSVEPNFSEKIFSTFFSNDFLNSNQTFEFNLFNLFFDVSLNFGKILAFLKLYYEIDFCSFVQKHSFDFEKNYSFKNSFSTKQFELFSNQSTLVSMYETVFFDYFSFFFHFLKIFKFSNFNMSNSVSLEFLNDSEKENIFYSQNFRTQKNFFFSLKALSFLLVGFNYENKQNLLSDPFDSGFEIFPNQNSVFMTQNFFSSKLFFKEKKQKKNNSKKLKKQLEIFISNKPLLSRQNFTERKKQIQNKKVQKFFDFDSMTENFECSFSSEKKFKLFQKKVSNSSLQLTQIQKKFKEPFLYKFIKQKNQKKKKFNNFHVFLSTKANSNLFFFEKKQKQQIQEKFQKMEKNHFLQNSILTIAYNYLWNNDADWKYFIYYNSLFFYEFEDHPIFLYRSLSPIKDTKNNQAFMFSDTNSSAIKFGQSFSSFLSWSIDDLPKNFFVGAGILEKLLTEYTSSELRKMTKQHQILLPKINQMLRFLKQNAKTKKDSLKIQKYFQKREQIIRRLKFLRKFSRRNSNPTFMILKNLPVLPPDLRPILKLQNQIAASDLNRFYQRIIYRNDRLKKFAKDSATNQSFEIKYAQRLLQEAVDNLIQNGKGSVKAETNSRGQPLKSLSEILKGKQGRFRQYLLGKRVDYSGRSVIVVGPELKLYECGLPKEMALELFLPFLIQYILQNKLAQTVVGAKNLLKSDSNLTLHLLHKVIKNIPILLNRAPTLHRLGFQAFLPKLIEGRAILLHPMVCPSFNADFDGDQMAVHIPLTVEARTEAWKFMLATNNLMNSATGEAIILPSQDMVLGCYYLTLDFQSKFVGVQLSNLLKKQNSFFPFSKPTYLGKEKTFQIQGKNFEKFGIQNKAFLLFSNFLSVLNAYQRKEISLHTPVWVKWNSNVDFGNEFSKPVEIRLQINGSWEEIQPKYTTFYNYKNKQLQKIIRTTPGRILMNFMIQQCSMS</sequence>
<feature type="chain" id="PRO_0000353515" description="DNA-directed RNA polymerase subunit beta'">
    <location>
        <begin position="1"/>
        <end position="1529"/>
    </location>
</feature>
<feature type="binding site" evidence="1">
    <location>
        <position position="156"/>
    </location>
    <ligand>
        <name>Zn(2+)</name>
        <dbReference type="ChEBI" id="CHEBI:29105"/>
    </ligand>
</feature>
<feature type="binding site" evidence="1">
    <location>
        <position position="158"/>
    </location>
    <ligand>
        <name>Zn(2+)</name>
        <dbReference type="ChEBI" id="CHEBI:29105"/>
    </ligand>
</feature>
<feature type="binding site" evidence="1">
    <location>
        <position position="183"/>
    </location>
    <ligand>
        <name>Zn(2+)</name>
        <dbReference type="ChEBI" id="CHEBI:29105"/>
    </ligand>
</feature>
<feature type="binding site" evidence="1">
    <location>
        <position position="186"/>
    </location>
    <ligand>
        <name>Zn(2+)</name>
        <dbReference type="ChEBI" id="CHEBI:29105"/>
    </ligand>
</feature>
<feature type="binding site" evidence="1">
    <location>
        <position position="1328"/>
    </location>
    <ligand>
        <name>Mg(2+)</name>
        <dbReference type="ChEBI" id="CHEBI:18420"/>
    </ligand>
</feature>
<feature type="binding site" evidence="1">
    <location>
        <position position="1330"/>
    </location>
    <ligand>
        <name>Mg(2+)</name>
        <dbReference type="ChEBI" id="CHEBI:18420"/>
    </ligand>
</feature>
<feature type="binding site" evidence="1">
    <location>
        <position position="1332"/>
    </location>
    <ligand>
        <name>Mg(2+)</name>
        <dbReference type="ChEBI" id="CHEBI:18420"/>
    </ligand>
</feature>
<protein>
    <recommendedName>
        <fullName evidence="1">DNA-directed RNA polymerase subunit beta'</fullName>
        <ecNumber evidence="1">2.7.7.6</ecNumber>
    </recommendedName>
    <alternativeName>
        <fullName evidence="1">PEP</fullName>
    </alternativeName>
    <alternativeName>
        <fullName evidence="1">Plastid-encoded RNA polymerase subunit beta'</fullName>
        <shortName evidence="1">RNA polymerase subunit beta'</shortName>
    </alternativeName>
</protein>
<evidence type="ECO:0000255" key="1">
    <source>
        <dbReference type="HAMAP-Rule" id="MF_01323"/>
    </source>
</evidence>
<evidence type="ECO:0000305" key="2"/>
<reference key="1">
    <citation type="journal article" date="2006" name="BMC Evol. Biol.">
        <title>The complete chloroplast genome sequence of the chlorophycean green alga Scenedesmus obliquus reveals a compact gene organization and a biased distribution of genes on the two DNA strands.</title>
        <authorList>
            <person name="de Cambiaire J.-C."/>
            <person name="Otis C."/>
            <person name="Lemieux C."/>
            <person name="Turmel M."/>
        </authorList>
    </citation>
    <scope>NUCLEOTIDE SEQUENCE [LARGE SCALE GENOMIC DNA]</scope>
    <source>
        <strain>UTEX 393</strain>
    </source>
</reference>
<gene>
    <name evidence="1" type="primary">rpoC1</name>
</gene>
<comment type="function">
    <text evidence="1">DNA-dependent RNA polymerase catalyzes the transcription of DNA into RNA using the four ribonucleoside triphosphates as substrates.</text>
</comment>
<comment type="catalytic activity">
    <reaction evidence="1">
        <text>RNA(n) + a ribonucleoside 5'-triphosphate = RNA(n+1) + diphosphate</text>
        <dbReference type="Rhea" id="RHEA:21248"/>
        <dbReference type="Rhea" id="RHEA-COMP:14527"/>
        <dbReference type="Rhea" id="RHEA-COMP:17342"/>
        <dbReference type="ChEBI" id="CHEBI:33019"/>
        <dbReference type="ChEBI" id="CHEBI:61557"/>
        <dbReference type="ChEBI" id="CHEBI:140395"/>
        <dbReference type="EC" id="2.7.7.6"/>
    </reaction>
</comment>
<comment type="cofactor">
    <cofactor evidence="1">
        <name>Mg(2+)</name>
        <dbReference type="ChEBI" id="CHEBI:18420"/>
    </cofactor>
    <text evidence="1">Binds 1 Mg(2+) ion per subunit.</text>
</comment>
<comment type="cofactor">
    <cofactor evidence="1">
        <name>Zn(2+)</name>
        <dbReference type="ChEBI" id="CHEBI:29105"/>
    </cofactor>
    <text evidence="1">Binds 1 Zn(2+) ion per subunit.</text>
</comment>
<comment type="subunit">
    <text evidence="1">In plastids the minimal PEP RNA polymerase catalytic core is composed of four subunits: alpha, beta, beta', and beta''. When a (nuclear-encoded) sigma factor is associated with the core the holoenzyme is formed, which can initiate transcription.</text>
</comment>
<comment type="subcellular location">
    <subcellularLocation>
        <location evidence="1">Plastid</location>
        <location evidence="1">Chloroplast</location>
    </subcellularLocation>
</comment>
<comment type="similarity">
    <text evidence="1 2">Belongs to the RNA polymerase beta' chain family. RpoC1 subfamily.</text>
</comment>
<keyword id="KW-0150">Chloroplast</keyword>
<keyword id="KW-0240">DNA-directed RNA polymerase</keyword>
<keyword id="KW-0460">Magnesium</keyword>
<keyword id="KW-0479">Metal-binding</keyword>
<keyword id="KW-0548">Nucleotidyltransferase</keyword>
<keyword id="KW-0934">Plastid</keyword>
<keyword id="KW-0804">Transcription</keyword>
<keyword id="KW-0808">Transferase</keyword>
<keyword id="KW-0862">Zinc</keyword>
<accession>Q1KVT3</accession>
<name>RPOC1_TETOB</name>
<geneLocation type="chloroplast"/>
<dbReference type="EC" id="2.7.7.6" evidence="1"/>
<dbReference type="EMBL" id="DQ396875">
    <property type="protein sequence ID" value="ABD48274.1"/>
    <property type="molecule type" value="Genomic_DNA"/>
</dbReference>
<dbReference type="RefSeq" id="YP_635991.1">
    <property type="nucleotide sequence ID" value="NC_008101.1"/>
</dbReference>
<dbReference type="SMR" id="Q1KVT3"/>
<dbReference type="GeneID" id="4099810"/>
<dbReference type="GO" id="GO:0009507">
    <property type="term" value="C:chloroplast"/>
    <property type="evidence" value="ECO:0007669"/>
    <property type="project" value="UniProtKB-SubCell"/>
</dbReference>
<dbReference type="GO" id="GO:0000428">
    <property type="term" value="C:DNA-directed RNA polymerase complex"/>
    <property type="evidence" value="ECO:0007669"/>
    <property type="project" value="UniProtKB-KW"/>
</dbReference>
<dbReference type="GO" id="GO:0005739">
    <property type="term" value="C:mitochondrion"/>
    <property type="evidence" value="ECO:0007669"/>
    <property type="project" value="GOC"/>
</dbReference>
<dbReference type="GO" id="GO:0003677">
    <property type="term" value="F:DNA binding"/>
    <property type="evidence" value="ECO:0007669"/>
    <property type="project" value="UniProtKB-UniRule"/>
</dbReference>
<dbReference type="GO" id="GO:0003899">
    <property type="term" value="F:DNA-directed RNA polymerase activity"/>
    <property type="evidence" value="ECO:0007669"/>
    <property type="project" value="UniProtKB-UniRule"/>
</dbReference>
<dbReference type="GO" id="GO:0000287">
    <property type="term" value="F:magnesium ion binding"/>
    <property type="evidence" value="ECO:0007669"/>
    <property type="project" value="UniProtKB-UniRule"/>
</dbReference>
<dbReference type="GO" id="GO:0008270">
    <property type="term" value="F:zinc ion binding"/>
    <property type="evidence" value="ECO:0007669"/>
    <property type="project" value="UniProtKB-UniRule"/>
</dbReference>
<dbReference type="GO" id="GO:0006351">
    <property type="term" value="P:DNA-templated transcription"/>
    <property type="evidence" value="ECO:0007669"/>
    <property type="project" value="UniProtKB-UniRule"/>
</dbReference>
<dbReference type="Gene3D" id="1.10.40.90">
    <property type="match status" value="1"/>
</dbReference>
<dbReference type="Gene3D" id="2.40.40.20">
    <property type="match status" value="1"/>
</dbReference>
<dbReference type="Gene3D" id="4.10.860.120">
    <property type="entry name" value="RNA polymerase II, clamp domain"/>
    <property type="match status" value="1"/>
</dbReference>
<dbReference type="Gene3D" id="1.10.274.100">
    <property type="entry name" value="RNA polymerase Rpb1, domain 3"/>
    <property type="match status" value="1"/>
</dbReference>
<dbReference type="HAMAP" id="MF_01323">
    <property type="entry name" value="RNApol_bact_RpoC1"/>
    <property type="match status" value="1"/>
</dbReference>
<dbReference type="InterPro" id="IPR045867">
    <property type="entry name" value="DNA-dir_RpoC_beta_prime"/>
</dbReference>
<dbReference type="InterPro" id="IPR000722">
    <property type="entry name" value="RNA_pol_asu"/>
</dbReference>
<dbReference type="InterPro" id="IPR006592">
    <property type="entry name" value="RNA_pol_N"/>
</dbReference>
<dbReference type="InterPro" id="IPR007080">
    <property type="entry name" value="RNA_pol_Rpb1_1"/>
</dbReference>
<dbReference type="InterPro" id="IPR042102">
    <property type="entry name" value="RNA_pol_Rpb1_3_sf"/>
</dbReference>
<dbReference type="InterPro" id="IPR044893">
    <property type="entry name" value="RNA_pol_Rpb1_clamp_domain"/>
</dbReference>
<dbReference type="InterPro" id="IPR034678">
    <property type="entry name" value="RNApol_RpoC1"/>
</dbReference>
<dbReference type="PANTHER" id="PTHR19376">
    <property type="entry name" value="DNA-DIRECTED RNA POLYMERASE"/>
    <property type="match status" value="1"/>
</dbReference>
<dbReference type="PANTHER" id="PTHR19376:SF54">
    <property type="entry name" value="DNA-DIRECTED RNA POLYMERASE SUBUNIT BETA"/>
    <property type="match status" value="1"/>
</dbReference>
<dbReference type="Pfam" id="PF04997">
    <property type="entry name" value="RNA_pol_Rpb1_1"/>
    <property type="match status" value="2"/>
</dbReference>
<dbReference type="Pfam" id="PF00623">
    <property type="entry name" value="RNA_pol_Rpb1_2"/>
    <property type="match status" value="2"/>
</dbReference>
<dbReference type="SMART" id="SM00663">
    <property type="entry name" value="RPOLA_N"/>
    <property type="match status" value="1"/>
</dbReference>
<dbReference type="SUPFAM" id="SSF64484">
    <property type="entry name" value="beta and beta-prime subunits of DNA dependent RNA-polymerase"/>
    <property type="match status" value="1"/>
</dbReference>
<proteinExistence type="inferred from homology"/>
<organism>
    <name type="scientific">Tetradesmus obliquus</name>
    <name type="common">Green alga</name>
    <name type="synonym">Acutodesmus obliquus</name>
    <dbReference type="NCBI Taxonomy" id="3088"/>
    <lineage>
        <taxon>Eukaryota</taxon>
        <taxon>Viridiplantae</taxon>
        <taxon>Chlorophyta</taxon>
        <taxon>core chlorophytes</taxon>
        <taxon>Chlorophyceae</taxon>
        <taxon>CS clade</taxon>
        <taxon>Sphaeropleales</taxon>
        <taxon>Scenedesmaceae</taxon>
        <taxon>Tetradesmus</taxon>
    </lineage>
</organism>